<feature type="chain" id="PRO_1000061010" description="Small ribosomal subunit protein uS9">
    <location>
        <begin position="1"/>
        <end position="134"/>
    </location>
</feature>
<feature type="region of interest" description="Disordered" evidence="2">
    <location>
        <begin position="109"/>
        <end position="134"/>
    </location>
</feature>
<feature type="compositionally biased region" description="Basic residues" evidence="2">
    <location>
        <begin position="118"/>
        <end position="134"/>
    </location>
</feature>
<comment type="similarity">
    <text evidence="1">Belongs to the universal ribosomal protein uS9 family.</text>
</comment>
<evidence type="ECO:0000255" key="1">
    <source>
        <dbReference type="HAMAP-Rule" id="MF_00532"/>
    </source>
</evidence>
<evidence type="ECO:0000256" key="2">
    <source>
        <dbReference type="SAM" id="MobiDB-lite"/>
    </source>
</evidence>
<evidence type="ECO:0000305" key="3"/>
<keyword id="KW-0687">Ribonucleoprotein</keyword>
<keyword id="KW-0689">Ribosomal protein</keyword>
<organism>
    <name type="scientific">Methanococcus vannielii (strain ATCC 35089 / DSM 1224 / JCM 13029 / OCM 148 / SB)</name>
    <dbReference type="NCBI Taxonomy" id="406327"/>
    <lineage>
        <taxon>Archaea</taxon>
        <taxon>Methanobacteriati</taxon>
        <taxon>Methanobacteriota</taxon>
        <taxon>Methanomada group</taxon>
        <taxon>Methanococci</taxon>
        <taxon>Methanococcales</taxon>
        <taxon>Methanococcaceae</taxon>
        <taxon>Methanococcus</taxon>
    </lineage>
</organism>
<name>RS9_METVS</name>
<gene>
    <name evidence="1" type="primary">rps9</name>
    <name type="ordered locus">Mevan_0636</name>
</gene>
<sequence length="134" mass="14871">MKVVHTVGKRRTAIARATATEGSGKIRINKKPLELMEPKYIKMKLMEPVILAGEILGSIDVDVDVKGGGTVSQMDAARTALGKAIIEFTGKMELKEMFLSYDRTLLVSDARRTEPHKPSKSSKGPRARRQKSYR</sequence>
<dbReference type="EMBL" id="CP000742">
    <property type="protein sequence ID" value="ABR54542.1"/>
    <property type="molecule type" value="Genomic_DNA"/>
</dbReference>
<dbReference type="RefSeq" id="WP_011972445.1">
    <property type="nucleotide sequence ID" value="NC_009634.1"/>
</dbReference>
<dbReference type="SMR" id="A6UPX0"/>
<dbReference type="STRING" id="406327.Mevan_0636"/>
<dbReference type="GeneID" id="5325262"/>
<dbReference type="KEGG" id="mvn:Mevan_0636"/>
<dbReference type="eggNOG" id="arCOG04243">
    <property type="taxonomic scope" value="Archaea"/>
</dbReference>
<dbReference type="HOGENOM" id="CLU_046483_4_0_2"/>
<dbReference type="OrthoDB" id="52677at2157"/>
<dbReference type="Proteomes" id="UP000001107">
    <property type="component" value="Chromosome"/>
</dbReference>
<dbReference type="GO" id="GO:0022627">
    <property type="term" value="C:cytosolic small ribosomal subunit"/>
    <property type="evidence" value="ECO:0007669"/>
    <property type="project" value="TreeGrafter"/>
</dbReference>
<dbReference type="GO" id="GO:0003723">
    <property type="term" value="F:RNA binding"/>
    <property type="evidence" value="ECO:0007669"/>
    <property type="project" value="TreeGrafter"/>
</dbReference>
<dbReference type="GO" id="GO:0003735">
    <property type="term" value="F:structural constituent of ribosome"/>
    <property type="evidence" value="ECO:0007669"/>
    <property type="project" value="InterPro"/>
</dbReference>
<dbReference type="GO" id="GO:0000462">
    <property type="term" value="P:maturation of SSU-rRNA from tricistronic rRNA transcript (SSU-rRNA, 5.8S rRNA, LSU-rRNA)"/>
    <property type="evidence" value="ECO:0007669"/>
    <property type="project" value="TreeGrafter"/>
</dbReference>
<dbReference type="GO" id="GO:0006412">
    <property type="term" value="P:translation"/>
    <property type="evidence" value="ECO:0007669"/>
    <property type="project" value="UniProtKB-UniRule"/>
</dbReference>
<dbReference type="Gene3D" id="3.30.230.10">
    <property type="match status" value="1"/>
</dbReference>
<dbReference type="HAMAP" id="MF_00532_A">
    <property type="entry name" value="Ribosomal_uS9_A"/>
    <property type="match status" value="1"/>
</dbReference>
<dbReference type="InterPro" id="IPR020568">
    <property type="entry name" value="Ribosomal_Su5_D2-typ_SF"/>
</dbReference>
<dbReference type="InterPro" id="IPR000754">
    <property type="entry name" value="Ribosomal_uS9"/>
</dbReference>
<dbReference type="InterPro" id="IPR019958">
    <property type="entry name" value="Ribosomal_uS9_archaeal"/>
</dbReference>
<dbReference type="InterPro" id="IPR020574">
    <property type="entry name" value="Ribosomal_uS9_CS"/>
</dbReference>
<dbReference type="InterPro" id="IPR014721">
    <property type="entry name" value="Ribsml_uS5_D2-typ_fold_subgr"/>
</dbReference>
<dbReference type="NCBIfam" id="NF001749">
    <property type="entry name" value="PRK00474.1"/>
    <property type="match status" value="1"/>
</dbReference>
<dbReference type="NCBIfam" id="TIGR03627">
    <property type="entry name" value="uS9_arch"/>
    <property type="match status" value="1"/>
</dbReference>
<dbReference type="PANTHER" id="PTHR21569:SF16">
    <property type="entry name" value="RIBOSOMAL PROTEIN S16"/>
    <property type="match status" value="1"/>
</dbReference>
<dbReference type="PANTHER" id="PTHR21569">
    <property type="entry name" value="RIBOSOMAL PROTEIN S9"/>
    <property type="match status" value="1"/>
</dbReference>
<dbReference type="Pfam" id="PF00380">
    <property type="entry name" value="Ribosomal_S9"/>
    <property type="match status" value="1"/>
</dbReference>
<dbReference type="SUPFAM" id="SSF54211">
    <property type="entry name" value="Ribosomal protein S5 domain 2-like"/>
    <property type="match status" value="1"/>
</dbReference>
<dbReference type="PROSITE" id="PS00360">
    <property type="entry name" value="RIBOSOMAL_S9"/>
    <property type="match status" value="1"/>
</dbReference>
<accession>A6UPX0</accession>
<reference key="1">
    <citation type="submission" date="2007-06" db="EMBL/GenBank/DDBJ databases">
        <title>Complete sequence of Methanococcus vannielii SB.</title>
        <authorList>
            <consortium name="US DOE Joint Genome Institute"/>
            <person name="Copeland A."/>
            <person name="Lucas S."/>
            <person name="Lapidus A."/>
            <person name="Barry K."/>
            <person name="Glavina del Rio T."/>
            <person name="Dalin E."/>
            <person name="Tice H."/>
            <person name="Pitluck S."/>
            <person name="Chain P."/>
            <person name="Malfatti S."/>
            <person name="Shin M."/>
            <person name="Vergez L."/>
            <person name="Schmutz J."/>
            <person name="Larimer F."/>
            <person name="Land M."/>
            <person name="Hauser L."/>
            <person name="Kyrpides N."/>
            <person name="Anderson I."/>
            <person name="Sieprawska-Lupa M."/>
            <person name="Whitman W.B."/>
            <person name="Richardson P."/>
        </authorList>
    </citation>
    <scope>NUCLEOTIDE SEQUENCE [LARGE SCALE GENOMIC DNA]</scope>
    <source>
        <strain>ATCC 35089 / DSM 1224 / JCM 13029 / OCM 148 / SB</strain>
    </source>
</reference>
<protein>
    <recommendedName>
        <fullName evidence="1">Small ribosomal subunit protein uS9</fullName>
    </recommendedName>
    <alternativeName>
        <fullName evidence="3">30S ribosomal protein S9</fullName>
    </alternativeName>
</protein>
<proteinExistence type="inferred from homology"/>